<accession>Q725I1</accession>
<name>GSA_NITV2</name>
<evidence type="ECO:0000255" key="1">
    <source>
        <dbReference type="HAMAP-Rule" id="MF_00375"/>
    </source>
</evidence>
<organism>
    <name type="scientific">Nitratidesulfovibrio vulgaris (strain ATCC 29579 / DSM 644 / CCUG 34227 / NCIMB 8303 / VKM B-1760 / Hildenborough)</name>
    <name type="common">Desulfovibrio vulgaris</name>
    <dbReference type="NCBI Taxonomy" id="882"/>
    <lineage>
        <taxon>Bacteria</taxon>
        <taxon>Pseudomonadati</taxon>
        <taxon>Thermodesulfobacteriota</taxon>
        <taxon>Desulfovibrionia</taxon>
        <taxon>Desulfovibrionales</taxon>
        <taxon>Desulfovibrionaceae</taxon>
        <taxon>Nitratidesulfovibrio</taxon>
    </lineage>
</organism>
<gene>
    <name evidence="1" type="primary">hemL</name>
    <name type="ordered locus">DVU_3168</name>
</gene>
<sequence>MSQRSSELFERAQQLIPGGVNSPVRACLGVDSEPLFIARAAGSRLHTVDGETFIDFVESWGPMLLGHTHPEVTAAVHAAVDRGTSYGAPCEDEVVLAAKVVDALPGVDMVRMVNSGTEATMSALRLARGYTGRTKLVKFVGCYHGHADPFLASAGSGVATLSIPGTPGVPESTVRDTLLAPYNDLAAVKDLFALHGKDIAAIIVEAVAGNMGLVPPKAGFLEGLRELCDQHGALLIFDEVITGFRVSFGGAQQRFGITPDLTTLGKIIGGGLPVGAYGGKREIMQRIAPCGEVYQAGTLSGNPLAMAAGIATLDVLSRSDYAGLEARVAAFVKELEAILKGKGVPVRINTLASMFTVFFTNDPVTDFASAKTADGALYTSFYKQMRAQGIYLAPSPFEAAMVSFAHTDDDLAAMLDAARKVTF</sequence>
<reference key="1">
    <citation type="journal article" date="2004" name="Nat. Biotechnol.">
        <title>The genome sequence of the anaerobic, sulfate-reducing bacterium Desulfovibrio vulgaris Hildenborough.</title>
        <authorList>
            <person name="Heidelberg J.F."/>
            <person name="Seshadri R."/>
            <person name="Haveman S.A."/>
            <person name="Hemme C.L."/>
            <person name="Paulsen I.T."/>
            <person name="Kolonay J.F."/>
            <person name="Eisen J.A."/>
            <person name="Ward N.L."/>
            <person name="Methe B.A."/>
            <person name="Brinkac L.M."/>
            <person name="Daugherty S.C."/>
            <person name="DeBoy R.T."/>
            <person name="Dodson R.J."/>
            <person name="Durkin A.S."/>
            <person name="Madupu R."/>
            <person name="Nelson W.C."/>
            <person name="Sullivan S.A."/>
            <person name="Fouts D.E."/>
            <person name="Haft D.H."/>
            <person name="Selengut J."/>
            <person name="Peterson J.D."/>
            <person name="Davidsen T.M."/>
            <person name="Zafar N."/>
            <person name="Zhou L."/>
            <person name="Radune D."/>
            <person name="Dimitrov G."/>
            <person name="Hance M."/>
            <person name="Tran K."/>
            <person name="Khouri H.M."/>
            <person name="Gill J."/>
            <person name="Utterback T.R."/>
            <person name="Feldblyum T.V."/>
            <person name="Wall J.D."/>
            <person name="Voordouw G."/>
            <person name="Fraser C.M."/>
        </authorList>
    </citation>
    <scope>NUCLEOTIDE SEQUENCE [LARGE SCALE GENOMIC DNA]</scope>
    <source>
        <strain>ATCC 29579 / DSM 644 / CCUG 34227 / NCIMB 8303 / VKM B-1760 / Hildenborough</strain>
    </source>
</reference>
<keyword id="KW-0963">Cytoplasm</keyword>
<keyword id="KW-0413">Isomerase</keyword>
<keyword id="KW-0627">Porphyrin biosynthesis</keyword>
<keyword id="KW-0663">Pyridoxal phosphate</keyword>
<keyword id="KW-1185">Reference proteome</keyword>
<dbReference type="EC" id="5.4.3.8" evidence="1"/>
<dbReference type="EMBL" id="AE017285">
    <property type="protein sequence ID" value="AAS97638.1"/>
    <property type="molecule type" value="Genomic_DNA"/>
</dbReference>
<dbReference type="RefSeq" id="WP_010940426.1">
    <property type="nucleotide sequence ID" value="NC_002937.3"/>
</dbReference>
<dbReference type="RefSeq" id="YP_012378.1">
    <property type="nucleotide sequence ID" value="NC_002937.3"/>
</dbReference>
<dbReference type="SMR" id="Q725I1"/>
<dbReference type="IntAct" id="Q725I1">
    <property type="interactions" value="2"/>
</dbReference>
<dbReference type="STRING" id="882.DVU_3168"/>
<dbReference type="PaxDb" id="882-DVU_3168"/>
<dbReference type="EnsemblBacteria" id="AAS97638">
    <property type="protein sequence ID" value="AAS97638"/>
    <property type="gene ID" value="DVU_3168"/>
</dbReference>
<dbReference type="KEGG" id="dvu:DVU_3168"/>
<dbReference type="PATRIC" id="fig|882.5.peg.2873"/>
<dbReference type="eggNOG" id="COG0001">
    <property type="taxonomic scope" value="Bacteria"/>
</dbReference>
<dbReference type="HOGENOM" id="CLU_016922_1_5_7"/>
<dbReference type="OrthoDB" id="9801052at2"/>
<dbReference type="PhylomeDB" id="Q725I1"/>
<dbReference type="UniPathway" id="UPA00251">
    <property type="reaction ID" value="UER00317"/>
</dbReference>
<dbReference type="Proteomes" id="UP000002194">
    <property type="component" value="Chromosome"/>
</dbReference>
<dbReference type="GO" id="GO:0005737">
    <property type="term" value="C:cytoplasm"/>
    <property type="evidence" value="ECO:0007669"/>
    <property type="project" value="UniProtKB-SubCell"/>
</dbReference>
<dbReference type="GO" id="GO:0042286">
    <property type="term" value="F:glutamate-1-semialdehyde 2,1-aminomutase activity"/>
    <property type="evidence" value="ECO:0007669"/>
    <property type="project" value="UniProtKB-UniRule"/>
</dbReference>
<dbReference type="GO" id="GO:0030170">
    <property type="term" value="F:pyridoxal phosphate binding"/>
    <property type="evidence" value="ECO:0007669"/>
    <property type="project" value="InterPro"/>
</dbReference>
<dbReference type="GO" id="GO:0008483">
    <property type="term" value="F:transaminase activity"/>
    <property type="evidence" value="ECO:0007669"/>
    <property type="project" value="InterPro"/>
</dbReference>
<dbReference type="GO" id="GO:0006782">
    <property type="term" value="P:protoporphyrinogen IX biosynthetic process"/>
    <property type="evidence" value="ECO:0007669"/>
    <property type="project" value="UniProtKB-UniRule"/>
</dbReference>
<dbReference type="CDD" id="cd00610">
    <property type="entry name" value="OAT_like"/>
    <property type="match status" value="1"/>
</dbReference>
<dbReference type="FunFam" id="3.40.640.10:FF:000021">
    <property type="entry name" value="Glutamate-1-semialdehyde 2,1-aminomutase"/>
    <property type="match status" value="1"/>
</dbReference>
<dbReference type="Gene3D" id="3.90.1150.10">
    <property type="entry name" value="Aspartate Aminotransferase, domain 1"/>
    <property type="match status" value="1"/>
</dbReference>
<dbReference type="Gene3D" id="3.40.640.10">
    <property type="entry name" value="Type I PLP-dependent aspartate aminotransferase-like (Major domain)"/>
    <property type="match status" value="1"/>
</dbReference>
<dbReference type="HAMAP" id="MF_00375">
    <property type="entry name" value="HemL_aminotrans_3"/>
    <property type="match status" value="1"/>
</dbReference>
<dbReference type="InterPro" id="IPR004639">
    <property type="entry name" value="4pyrrol_synth_GluAld_NH2Trfase"/>
</dbReference>
<dbReference type="InterPro" id="IPR005814">
    <property type="entry name" value="Aminotrans_3"/>
</dbReference>
<dbReference type="InterPro" id="IPR049704">
    <property type="entry name" value="Aminotrans_3_PPA_site"/>
</dbReference>
<dbReference type="InterPro" id="IPR015424">
    <property type="entry name" value="PyrdxlP-dep_Trfase"/>
</dbReference>
<dbReference type="InterPro" id="IPR015421">
    <property type="entry name" value="PyrdxlP-dep_Trfase_major"/>
</dbReference>
<dbReference type="InterPro" id="IPR015422">
    <property type="entry name" value="PyrdxlP-dep_Trfase_small"/>
</dbReference>
<dbReference type="NCBIfam" id="TIGR00713">
    <property type="entry name" value="hemL"/>
    <property type="match status" value="1"/>
</dbReference>
<dbReference type="NCBIfam" id="NF000818">
    <property type="entry name" value="PRK00062.1"/>
    <property type="match status" value="1"/>
</dbReference>
<dbReference type="PANTHER" id="PTHR43713">
    <property type="entry name" value="GLUTAMATE-1-SEMIALDEHYDE 2,1-AMINOMUTASE"/>
    <property type="match status" value="1"/>
</dbReference>
<dbReference type="PANTHER" id="PTHR43713:SF3">
    <property type="entry name" value="GLUTAMATE-1-SEMIALDEHYDE 2,1-AMINOMUTASE 1, CHLOROPLASTIC-RELATED"/>
    <property type="match status" value="1"/>
</dbReference>
<dbReference type="Pfam" id="PF00202">
    <property type="entry name" value="Aminotran_3"/>
    <property type="match status" value="1"/>
</dbReference>
<dbReference type="SUPFAM" id="SSF53383">
    <property type="entry name" value="PLP-dependent transferases"/>
    <property type="match status" value="1"/>
</dbReference>
<dbReference type="PROSITE" id="PS00600">
    <property type="entry name" value="AA_TRANSFER_CLASS_3"/>
    <property type="match status" value="1"/>
</dbReference>
<feature type="chain" id="PRO_0000243570" description="Glutamate-1-semialdehyde 2,1-aminomutase">
    <location>
        <begin position="1"/>
        <end position="423"/>
    </location>
</feature>
<feature type="modified residue" description="N6-(pyridoxal phosphate)lysine" evidence="1">
    <location>
        <position position="266"/>
    </location>
</feature>
<protein>
    <recommendedName>
        <fullName evidence="1">Glutamate-1-semialdehyde 2,1-aminomutase</fullName>
        <shortName evidence="1">GSA</shortName>
        <ecNumber evidence="1">5.4.3.8</ecNumber>
    </recommendedName>
    <alternativeName>
        <fullName evidence="1">Glutamate-1-semialdehyde aminotransferase</fullName>
        <shortName evidence="1">GSA-AT</shortName>
    </alternativeName>
</protein>
<proteinExistence type="evidence at protein level"/>
<comment type="catalytic activity">
    <reaction evidence="1">
        <text>(S)-4-amino-5-oxopentanoate = 5-aminolevulinate</text>
        <dbReference type="Rhea" id="RHEA:14265"/>
        <dbReference type="ChEBI" id="CHEBI:57501"/>
        <dbReference type="ChEBI" id="CHEBI:356416"/>
        <dbReference type="EC" id="5.4.3.8"/>
    </reaction>
</comment>
<comment type="cofactor">
    <cofactor evidence="1">
        <name>pyridoxal 5'-phosphate</name>
        <dbReference type="ChEBI" id="CHEBI:597326"/>
    </cofactor>
</comment>
<comment type="pathway">
    <text evidence="1">Porphyrin-containing compound metabolism; protoporphyrin-IX biosynthesis; 5-aminolevulinate from L-glutamyl-tRNA(Glu): step 2/2.</text>
</comment>
<comment type="subunit">
    <text evidence="1">Homodimer.</text>
</comment>
<comment type="interaction">
    <interactant intactId="EBI-10072079">
        <id>Q725I1</id>
    </interactant>
    <interactant intactId="EBI-10072083">
        <id>Q72FZ5</id>
        <label>DVU_0068</label>
    </interactant>
    <organismsDiffer>false</organismsDiffer>
    <experiments>2</experiments>
</comment>
<comment type="subcellular location">
    <subcellularLocation>
        <location evidence="1">Cytoplasm</location>
    </subcellularLocation>
</comment>
<comment type="similarity">
    <text evidence="1">Belongs to the class-III pyridoxal-phosphate-dependent aminotransferase family. HemL subfamily.</text>
</comment>